<dbReference type="EMBL" id="BC121616">
    <property type="protein sequence ID" value="AAI21617.1"/>
    <property type="molecule type" value="mRNA"/>
</dbReference>
<dbReference type="RefSeq" id="NP_001072405.1">
    <property type="nucleotide sequence ID" value="NM_001078937.1"/>
</dbReference>
<dbReference type="SMR" id="Q0V9D9"/>
<dbReference type="FunCoup" id="Q0V9D9">
    <property type="interactions" value="1454"/>
</dbReference>
<dbReference type="STRING" id="8364.ENSXETP00000014590"/>
<dbReference type="PaxDb" id="8364-ENSXETP00000017668"/>
<dbReference type="DNASU" id="779859"/>
<dbReference type="GeneID" id="779859"/>
<dbReference type="KEGG" id="xtr:779859"/>
<dbReference type="AGR" id="Xenbase:XB-GENE-6258829"/>
<dbReference type="CTD" id="65260"/>
<dbReference type="Xenbase" id="XB-GENE-6258829">
    <property type="gene designation" value="coa7"/>
</dbReference>
<dbReference type="eggNOG" id="KOG4014">
    <property type="taxonomic scope" value="Eukaryota"/>
</dbReference>
<dbReference type="HOGENOM" id="CLU_000288_36_9_1"/>
<dbReference type="InParanoid" id="Q0V9D9"/>
<dbReference type="OMA" id="PGCINAG"/>
<dbReference type="OrthoDB" id="272077at2759"/>
<dbReference type="PhylomeDB" id="Q0V9D9"/>
<dbReference type="TreeFam" id="TF105805"/>
<dbReference type="Proteomes" id="UP000008143">
    <property type="component" value="Chromosome 4"/>
</dbReference>
<dbReference type="Bgee" id="ENSXETG00000008063">
    <property type="expression patterns" value="Expressed in heart and 12 other cell types or tissues"/>
</dbReference>
<dbReference type="ExpressionAtlas" id="Q0V9D9">
    <property type="expression patterns" value="baseline"/>
</dbReference>
<dbReference type="GO" id="GO:0005758">
    <property type="term" value="C:mitochondrial intermembrane space"/>
    <property type="evidence" value="ECO:0007669"/>
    <property type="project" value="UniProtKB-SubCell"/>
</dbReference>
<dbReference type="Gene3D" id="1.25.40.10">
    <property type="entry name" value="Tetratricopeptide repeat domain"/>
    <property type="match status" value="1"/>
</dbReference>
<dbReference type="InterPro" id="IPR040239">
    <property type="entry name" value="HcpB-like"/>
</dbReference>
<dbReference type="InterPro" id="IPR006597">
    <property type="entry name" value="Sel1-like"/>
</dbReference>
<dbReference type="InterPro" id="IPR011990">
    <property type="entry name" value="TPR-like_helical_dom_sf"/>
</dbReference>
<dbReference type="PANTHER" id="PTHR13891">
    <property type="entry name" value="CYTOCHROME C OXIDASE ASSEMBLY FACTOR 7"/>
    <property type="match status" value="1"/>
</dbReference>
<dbReference type="PANTHER" id="PTHR13891:SF1">
    <property type="entry name" value="CYTOCHROME C OXIDASE ASSEMBLY FACTOR 7"/>
    <property type="match status" value="1"/>
</dbReference>
<dbReference type="Pfam" id="PF08238">
    <property type="entry name" value="Sel1"/>
    <property type="match status" value="4"/>
</dbReference>
<dbReference type="SMART" id="SM00671">
    <property type="entry name" value="SEL1"/>
    <property type="match status" value="5"/>
</dbReference>
<dbReference type="SUPFAM" id="SSF81901">
    <property type="entry name" value="HCP-like"/>
    <property type="match status" value="1"/>
</dbReference>
<accession>Q0V9D9</accession>
<reference key="1">
    <citation type="submission" date="2006-08" db="EMBL/GenBank/DDBJ databases">
        <authorList>
            <consortium name="NIH - Xenopus Gene Collection (XGC) project"/>
        </authorList>
    </citation>
    <scope>NUCLEOTIDE SEQUENCE [LARGE SCALE MRNA]</scope>
    <source>
        <strain>N6</strain>
        <tissue>Skeletal muscle</tissue>
    </source>
</reference>
<sequence length="231" mass="25664">MAGLVDLKNEEEVKEYLDNLGTEYSYQCLKEKQPDGCNRLAEYLENIKKNFESAAQILKINCDQNEHSESCYKLGAYYVTGKGGLPVDLKAAYGCFLKSCNKGGKKSIDSCHNVGLLSHDGRVNDDKPDALKARDYYNKACDGNFAASCFNLSAIYLQGAPGIPKDMNMALHFSEKACSLGHMWGCANASRMYKLGDGVAKNDEKAESLKNKARDLHRMQQERTQQISFGE</sequence>
<gene>
    <name type="primary">coa7</name>
    <name type="synonym">selrc1</name>
</gene>
<organism>
    <name type="scientific">Xenopus tropicalis</name>
    <name type="common">Western clawed frog</name>
    <name type="synonym">Silurana tropicalis</name>
    <dbReference type="NCBI Taxonomy" id="8364"/>
    <lineage>
        <taxon>Eukaryota</taxon>
        <taxon>Metazoa</taxon>
        <taxon>Chordata</taxon>
        <taxon>Craniata</taxon>
        <taxon>Vertebrata</taxon>
        <taxon>Euteleostomi</taxon>
        <taxon>Amphibia</taxon>
        <taxon>Batrachia</taxon>
        <taxon>Anura</taxon>
        <taxon>Pipoidea</taxon>
        <taxon>Pipidae</taxon>
        <taxon>Xenopodinae</taxon>
        <taxon>Xenopus</taxon>
        <taxon>Silurana</taxon>
    </lineage>
</organism>
<comment type="function">
    <text evidence="1">May be required for assembly of mitochondrial respiratory chain complexes.</text>
</comment>
<comment type="subcellular location">
    <subcellularLocation>
        <location evidence="1">Mitochondrion intermembrane space</location>
    </subcellularLocation>
</comment>
<comment type="similarity">
    <text evidence="2">Belongs to the hcp beta-lactamase family.</text>
</comment>
<keyword id="KW-0496">Mitochondrion</keyword>
<keyword id="KW-1185">Reference proteome</keyword>
<keyword id="KW-0677">Repeat</keyword>
<feature type="chain" id="PRO_0000282369" description="Cytochrome c oxidase assembly factor 7">
    <location>
        <begin position="1"/>
        <end position="231"/>
    </location>
</feature>
<feature type="repeat" description="Sel1-like 1">
    <location>
        <begin position="34"/>
        <end position="66"/>
    </location>
</feature>
<feature type="repeat" description="Sel1-like 2">
    <location>
        <begin position="68"/>
        <end position="104"/>
    </location>
</feature>
<feature type="repeat" description="Sel1-like 3">
    <location>
        <begin position="108"/>
        <end position="145"/>
    </location>
</feature>
<feature type="repeat" description="Sel1-like 4">
    <location>
        <begin position="146"/>
        <end position="182"/>
    </location>
</feature>
<feature type="repeat" description="Sel1-like 5">
    <location>
        <begin position="183"/>
        <end position="218"/>
    </location>
</feature>
<name>COA7_XENTR</name>
<proteinExistence type="evidence at transcript level"/>
<evidence type="ECO:0000250" key="1"/>
<evidence type="ECO:0000305" key="2"/>
<protein>
    <recommendedName>
        <fullName>Cytochrome c oxidase assembly factor 7</fullName>
    </recommendedName>
    <alternativeName>
        <fullName>Beta-lactamase hcp-like protein SELRC1</fullName>
    </alternativeName>
    <alternativeName>
        <fullName>Sel1 repeat-containing protein 1</fullName>
    </alternativeName>
</protein>